<accession>P02961</accession>
<comment type="function">
    <text>SASP are proteins degraded in the first minutes of spore germination and provide amino acids for both new protein synthesis and metabolism. These proteins may be involved in dormant spore's high resistance to UV light.</text>
</comment>
<comment type="similarity">
    <text evidence="4">Belongs to the gamma-type SASP family.</text>
</comment>
<reference key="1">
    <citation type="journal article" date="1986" name="J. Bacteriol.">
        <title>Cloning and nucleotide sequence of the Bacillus megaterium gene coding for small, acid-soluble spore protein B.</title>
        <authorList>
            <person name="Hackett R.H."/>
            <person name="Setlow B."/>
            <person name="Setlow P."/>
        </authorList>
    </citation>
    <scope>NUCLEOTIDE SEQUENCE [GENOMIC DNA]</scope>
</reference>
<reference key="2">
    <citation type="journal article" date="1980" name="J. Biol. Chem.">
        <title>The amino acid sequence specificity of a protease from spores of Bacillus megaterium.</title>
        <authorList>
            <person name="Setlow P."/>
            <person name="Gerard C."/>
            <person name="Ozols J."/>
        </authorList>
    </citation>
    <scope>PROTEIN SEQUENCE OF 2-44 AND 68-79</scope>
</reference>
<reference key="3">
    <citation type="journal article" date="1980" name="J. Biol. Chem.">
        <title>The complete covalent structure of protein B. The third major protein degraded during germination of Bacillus megaterium spores.</title>
        <authorList>
            <person name="Setlow P."/>
            <person name="Ozols J."/>
        </authorList>
    </citation>
    <scope>PROTEIN SEQUENCE OF 33-97</scope>
</reference>
<gene>
    <name type="primary">sasP-B</name>
</gene>
<name>SASG_PRIMG</name>
<keyword id="KW-0903">Direct protein sequencing</keyword>
<keyword id="KW-0677">Repeat</keyword>
<keyword id="KW-0749">Sporulation</keyword>
<dbReference type="EMBL" id="M14161">
    <property type="protein sequence ID" value="AAA22293.1"/>
    <property type="molecule type" value="Genomic_DNA"/>
</dbReference>
<dbReference type="PIR" id="A25162">
    <property type="entry name" value="USBSBM"/>
</dbReference>
<dbReference type="RefSeq" id="WP_013055161.1">
    <property type="nucleotide sequence ID" value="NZ_WWFB01000006.1"/>
</dbReference>
<dbReference type="GO" id="GO:0030435">
    <property type="term" value="P:sporulation resulting in formation of a cellular spore"/>
    <property type="evidence" value="ECO:0007669"/>
    <property type="project" value="UniProtKB-KW"/>
</dbReference>
<dbReference type="InterPro" id="IPR006341">
    <property type="entry name" value="Spore_gamma"/>
</dbReference>
<dbReference type="NCBIfam" id="TIGR01442">
    <property type="entry name" value="SASP_gamma"/>
    <property type="match status" value="1"/>
</dbReference>
<dbReference type="Pfam" id="PF04259">
    <property type="entry name" value="SASP_gamma"/>
    <property type="match status" value="1"/>
</dbReference>
<organism>
    <name type="scientific">Priestia megaterium</name>
    <name type="common">Bacillus megaterium</name>
    <dbReference type="NCBI Taxonomy" id="1404"/>
    <lineage>
        <taxon>Bacteria</taxon>
        <taxon>Bacillati</taxon>
        <taxon>Bacillota</taxon>
        <taxon>Bacilli</taxon>
        <taxon>Bacillales</taxon>
        <taxon>Bacillaceae</taxon>
        <taxon>Priestia</taxon>
    </lineage>
</organism>
<sequence>MAKQTNKTASGTSTQHVKQQNAQASKNNFGTEFGSETNVQEVKQQNAQAAANKSQNAQASKNNFGTEFASETSAQEVRQQNAQAQAKKNQNSGKYQG</sequence>
<protein>
    <recommendedName>
        <fullName>Small, acid-soluble spore protein gamma-type</fullName>
        <shortName>SASP</shortName>
    </recommendedName>
</protein>
<proteinExistence type="evidence at protein level"/>
<evidence type="ECO:0000256" key="1">
    <source>
        <dbReference type="SAM" id="MobiDB-lite"/>
    </source>
</evidence>
<evidence type="ECO:0000269" key="2">
    <source>
    </source>
</evidence>
<evidence type="ECO:0000269" key="3">
    <source>
    </source>
</evidence>
<evidence type="ECO:0000305" key="4"/>
<feature type="initiator methionine" description="Removed" evidence="2">
    <location>
        <position position="1"/>
    </location>
</feature>
<feature type="chain" id="PRO_0000196323" description="Small, acid-soluble spore protein gamma-type">
    <location>
        <begin position="2"/>
        <end position="97"/>
    </location>
</feature>
<feature type="repeat">
    <location>
        <begin position="23"/>
        <end position="56"/>
    </location>
</feature>
<feature type="repeat">
    <location>
        <begin position="58"/>
        <end position="91"/>
    </location>
</feature>
<feature type="region of interest" description="Disordered" evidence="1">
    <location>
        <begin position="1"/>
        <end position="97"/>
    </location>
</feature>
<feature type="compositionally biased region" description="Polar residues" evidence="1">
    <location>
        <begin position="1"/>
        <end position="42"/>
    </location>
</feature>
<feature type="compositionally biased region" description="Low complexity" evidence="1">
    <location>
        <begin position="43"/>
        <end position="63"/>
    </location>
</feature>
<feature type="compositionally biased region" description="Polar residues" evidence="1">
    <location>
        <begin position="69"/>
        <end position="78"/>
    </location>
</feature>
<feature type="compositionally biased region" description="Low complexity" evidence="1">
    <location>
        <begin position="79"/>
        <end position="91"/>
    </location>
</feature>
<feature type="site" description="Cleavage; by spore protease" evidence="3">
    <location>
        <begin position="32"/>
        <end position="33"/>
    </location>
</feature>
<feature type="site" description="Cleavage; by spore protease" evidence="3">
    <location>
        <begin position="67"/>
        <end position="68"/>
    </location>
</feature>
<feature type="sequence conflict" description="In Ref. 2; AA sequence." evidence="4" ref="2">
    <original>N</original>
    <variation>D</variation>
    <location>
        <position position="21"/>
    </location>
</feature>